<gene>
    <name evidence="1" type="primary">ispF</name>
    <name type="ordered locus">CAB191</name>
</gene>
<proteinExistence type="inferred from homology"/>
<comment type="function">
    <text evidence="1">Involved in the biosynthesis of isopentenyl diphosphate (IPP) and dimethylallyl diphosphate (DMAPP), two major building blocks of isoprenoid compounds. Catalyzes the conversion of 4-diphosphocytidyl-2-C-methyl-D-erythritol 2-phosphate (CDP-ME2P) to 2-C-methyl-D-erythritol 2,4-cyclodiphosphate (ME-CPP) with a corresponding release of cytidine 5-monophosphate (CMP).</text>
</comment>
<comment type="catalytic activity">
    <reaction evidence="1">
        <text>4-CDP-2-C-methyl-D-erythritol 2-phosphate = 2-C-methyl-D-erythritol 2,4-cyclic diphosphate + CMP</text>
        <dbReference type="Rhea" id="RHEA:23864"/>
        <dbReference type="ChEBI" id="CHEBI:57919"/>
        <dbReference type="ChEBI" id="CHEBI:58483"/>
        <dbReference type="ChEBI" id="CHEBI:60377"/>
        <dbReference type="EC" id="4.6.1.12"/>
    </reaction>
</comment>
<comment type="cofactor">
    <cofactor evidence="1">
        <name>a divalent metal cation</name>
        <dbReference type="ChEBI" id="CHEBI:60240"/>
    </cofactor>
    <text evidence="1">Binds 1 divalent metal cation per subunit.</text>
</comment>
<comment type="pathway">
    <text evidence="1">Isoprenoid biosynthesis; isopentenyl diphosphate biosynthesis via DXP pathway; isopentenyl diphosphate from 1-deoxy-D-xylulose 5-phosphate: step 4/6.</text>
</comment>
<comment type="subunit">
    <text evidence="1">Homotrimer.</text>
</comment>
<comment type="similarity">
    <text evidence="1">Belongs to the IspF family.</text>
</comment>
<evidence type="ECO:0000255" key="1">
    <source>
        <dbReference type="HAMAP-Rule" id="MF_00107"/>
    </source>
</evidence>
<name>ISPF_CHLAB</name>
<reference key="1">
    <citation type="journal article" date="2005" name="Genome Res.">
        <title>The Chlamydophila abortus genome sequence reveals an array of variable proteins that contribute to interspecies variation.</title>
        <authorList>
            <person name="Thomson N.R."/>
            <person name="Yeats C."/>
            <person name="Bell K."/>
            <person name="Holden M.T.G."/>
            <person name="Bentley S.D."/>
            <person name="Livingstone M."/>
            <person name="Cerdeno-Tarraga A.-M."/>
            <person name="Harris B."/>
            <person name="Doggett J."/>
            <person name="Ormond D."/>
            <person name="Mungall K."/>
            <person name="Clarke K."/>
            <person name="Feltwell T."/>
            <person name="Hance Z."/>
            <person name="Sanders M."/>
            <person name="Quail M.A."/>
            <person name="Price C."/>
            <person name="Barrell B.G."/>
            <person name="Parkhill J."/>
            <person name="Longbottom D."/>
        </authorList>
    </citation>
    <scope>NUCLEOTIDE SEQUENCE [LARGE SCALE GENOMIC DNA]</scope>
    <source>
        <strain>DSM 27085 / S26/3</strain>
    </source>
</reference>
<sequence length="176" mass="18776">MNAENDSSLPKPQWIYRVGIGQDSHRFLSESSAKPCILAGVIFENSPGFQANSDGDIIFHAICNAISSVTHRIILGEVADELLHTRGITDSSVYLSEAIKSLKSNQMISHAAITIEGNRPKFLPKLSAMRQSIASALNIPLGSVGITATSGEGLSDFGCGDGVQCFCILTIMEYCG</sequence>
<accession>Q5L6S2</accession>
<organism>
    <name type="scientific">Chlamydia abortus (strain DSM 27085 / S26/3)</name>
    <name type="common">Chlamydophila abortus</name>
    <dbReference type="NCBI Taxonomy" id="218497"/>
    <lineage>
        <taxon>Bacteria</taxon>
        <taxon>Pseudomonadati</taxon>
        <taxon>Chlamydiota</taxon>
        <taxon>Chlamydiia</taxon>
        <taxon>Chlamydiales</taxon>
        <taxon>Chlamydiaceae</taxon>
        <taxon>Chlamydia/Chlamydophila group</taxon>
        <taxon>Chlamydia</taxon>
    </lineage>
</organism>
<dbReference type="EC" id="4.6.1.12" evidence="1"/>
<dbReference type="EMBL" id="CR848038">
    <property type="protein sequence ID" value="CAH63649.1"/>
    <property type="molecule type" value="Genomic_DNA"/>
</dbReference>
<dbReference type="RefSeq" id="WP_006343857.1">
    <property type="nucleotide sequence ID" value="NC_004552.2"/>
</dbReference>
<dbReference type="SMR" id="Q5L6S2"/>
<dbReference type="KEGG" id="cab:CAB191"/>
<dbReference type="eggNOG" id="COG0245">
    <property type="taxonomic scope" value="Bacteria"/>
</dbReference>
<dbReference type="HOGENOM" id="CLU_084630_2_0_0"/>
<dbReference type="OrthoDB" id="9804336at2"/>
<dbReference type="UniPathway" id="UPA00056">
    <property type="reaction ID" value="UER00095"/>
</dbReference>
<dbReference type="Proteomes" id="UP000001012">
    <property type="component" value="Chromosome"/>
</dbReference>
<dbReference type="GO" id="GO:0008685">
    <property type="term" value="F:2-C-methyl-D-erythritol 2,4-cyclodiphosphate synthase activity"/>
    <property type="evidence" value="ECO:0007669"/>
    <property type="project" value="UniProtKB-UniRule"/>
</dbReference>
<dbReference type="GO" id="GO:0046872">
    <property type="term" value="F:metal ion binding"/>
    <property type="evidence" value="ECO:0007669"/>
    <property type="project" value="UniProtKB-KW"/>
</dbReference>
<dbReference type="GO" id="GO:0019288">
    <property type="term" value="P:isopentenyl diphosphate biosynthetic process, methylerythritol 4-phosphate pathway"/>
    <property type="evidence" value="ECO:0007669"/>
    <property type="project" value="UniProtKB-UniRule"/>
</dbReference>
<dbReference type="GO" id="GO:0016114">
    <property type="term" value="P:terpenoid biosynthetic process"/>
    <property type="evidence" value="ECO:0007669"/>
    <property type="project" value="InterPro"/>
</dbReference>
<dbReference type="CDD" id="cd00554">
    <property type="entry name" value="MECDP_synthase"/>
    <property type="match status" value="1"/>
</dbReference>
<dbReference type="Gene3D" id="3.30.1330.50">
    <property type="entry name" value="2-C-methyl-D-erythritol 2,4-cyclodiphosphate synthase"/>
    <property type="match status" value="1"/>
</dbReference>
<dbReference type="HAMAP" id="MF_00107">
    <property type="entry name" value="IspF"/>
    <property type="match status" value="1"/>
</dbReference>
<dbReference type="InterPro" id="IPR003526">
    <property type="entry name" value="MECDP_synthase"/>
</dbReference>
<dbReference type="InterPro" id="IPR020555">
    <property type="entry name" value="MECDP_synthase_CS"/>
</dbReference>
<dbReference type="InterPro" id="IPR036571">
    <property type="entry name" value="MECDP_synthase_sf"/>
</dbReference>
<dbReference type="NCBIfam" id="TIGR00151">
    <property type="entry name" value="ispF"/>
    <property type="match status" value="1"/>
</dbReference>
<dbReference type="PANTHER" id="PTHR43181">
    <property type="entry name" value="2-C-METHYL-D-ERYTHRITOL 2,4-CYCLODIPHOSPHATE SYNTHASE, CHLOROPLASTIC"/>
    <property type="match status" value="1"/>
</dbReference>
<dbReference type="PANTHER" id="PTHR43181:SF1">
    <property type="entry name" value="2-C-METHYL-D-ERYTHRITOL 2,4-CYCLODIPHOSPHATE SYNTHASE, CHLOROPLASTIC"/>
    <property type="match status" value="1"/>
</dbReference>
<dbReference type="Pfam" id="PF02542">
    <property type="entry name" value="YgbB"/>
    <property type="match status" value="1"/>
</dbReference>
<dbReference type="SUPFAM" id="SSF69765">
    <property type="entry name" value="IpsF-like"/>
    <property type="match status" value="1"/>
</dbReference>
<dbReference type="PROSITE" id="PS01350">
    <property type="entry name" value="ISPF"/>
    <property type="match status" value="1"/>
</dbReference>
<keyword id="KW-0414">Isoprene biosynthesis</keyword>
<keyword id="KW-0456">Lyase</keyword>
<keyword id="KW-0479">Metal-binding</keyword>
<protein>
    <recommendedName>
        <fullName evidence="1">2-C-methyl-D-erythritol 2,4-cyclodiphosphate synthase</fullName>
        <shortName evidence="1">MECDP-synthase</shortName>
        <shortName evidence="1">MECPP-synthase</shortName>
        <shortName evidence="1">MECPS</shortName>
        <ecNumber evidence="1">4.6.1.12</ecNumber>
    </recommendedName>
</protein>
<feature type="chain" id="PRO_0000237715" description="2-C-methyl-D-erythritol 2,4-cyclodiphosphate synthase">
    <location>
        <begin position="1"/>
        <end position="176"/>
    </location>
</feature>
<feature type="binding site" evidence="1">
    <location>
        <begin position="23"/>
        <end position="25"/>
    </location>
    <ligand>
        <name>4-CDP-2-C-methyl-D-erythritol 2-phosphate</name>
        <dbReference type="ChEBI" id="CHEBI:57919"/>
    </ligand>
</feature>
<feature type="binding site" evidence="1">
    <location>
        <position position="23"/>
    </location>
    <ligand>
        <name>a divalent metal cation</name>
        <dbReference type="ChEBI" id="CHEBI:60240"/>
    </ligand>
</feature>
<feature type="binding site" evidence="1">
    <location>
        <position position="25"/>
    </location>
    <ligand>
        <name>a divalent metal cation</name>
        <dbReference type="ChEBI" id="CHEBI:60240"/>
    </ligand>
</feature>
<feature type="binding site" evidence="1">
    <location>
        <position position="60"/>
    </location>
    <ligand>
        <name>a divalent metal cation</name>
        <dbReference type="ChEBI" id="CHEBI:60240"/>
    </ligand>
</feature>
<feature type="binding site" evidence="1">
    <location>
        <begin position="149"/>
        <end position="152"/>
    </location>
    <ligand>
        <name>4-CDP-2-C-methyl-D-erythritol 2-phosphate</name>
        <dbReference type="ChEBI" id="CHEBI:57919"/>
    </ligand>
</feature>
<feature type="site" description="Transition state stabilizer" evidence="1">
    <location>
        <position position="52"/>
    </location>
</feature>
<feature type="site" description="Transition state stabilizer" evidence="1">
    <location>
        <position position="150"/>
    </location>
</feature>